<accession>P68355</accession>
<protein>
    <recommendedName>
        <fullName>COP9 signalosome complex subunit 5b</fullName>
        <shortName>Signalosome subunit 5b</shortName>
        <ecNumber>3.4.-.-</ecNumber>
    </recommendedName>
    <alternativeName>
        <fullName>Jun activation domain-binding homolog 1</fullName>
    </alternativeName>
</protein>
<name>CSN5B_BRAOL</name>
<dbReference type="EC" id="3.4.-.-"/>
<dbReference type="SMR" id="P68355"/>
<dbReference type="GO" id="GO:0008180">
    <property type="term" value="C:COP9 signalosome"/>
    <property type="evidence" value="ECO:0007669"/>
    <property type="project" value="UniProtKB-KW"/>
</dbReference>
<dbReference type="GO" id="GO:0005737">
    <property type="term" value="C:cytoplasm"/>
    <property type="evidence" value="ECO:0007669"/>
    <property type="project" value="UniProtKB-SubCell"/>
</dbReference>
<dbReference type="GO" id="GO:0046872">
    <property type="term" value="F:metal ion binding"/>
    <property type="evidence" value="ECO:0007669"/>
    <property type="project" value="UniProtKB-KW"/>
</dbReference>
<dbReference type="GO" id="GO:0008237">
    <property type="term" value="F:metallopeptidase activity"/>
    <property type="evidence" value="ECO:0007669"/>
    <property type="project" value="UniProtKB-KW"/>
</dbReference>
<dbReference type="GO" id="GO:0006508">
    <property type="term" value="P:proteolysis"/>
    <property type="evidence" value="ECO:0007669"/>
    <property type="project" value="UniProtKB-KW"/>
</dbReference>
<dbReference type="GO" id="GO:0009585">
    <property type="term" value="P:red, far-red light phototransduction"/>
    <property type="evidence" value="ECO:0007669"/>
    <property type="project" value="UniProtKB-KW"/>
</dbReference>
<dbReference type="Gene3D" id="3.40.140.10">
    <property type="entry name" value="Cytidine Deaminase, domain 2"/>
    <property type="match status" value="1"/>
</dbReference>
<feature type="chain" id="PRO_0000194845" description="COP9 signalosome complex subunit 5b">
    <location>
        <begin position="1" status="less than"/>
        <end position="78" status="greater than"/>
    </location>
</feature>
<feature type="non-consecutive residues" evidence="2">
    <location>
        <begin position="22"/>
        <end position="23"/>
    </location>
</feature>
<feature type="non-consecutive residues" evidence="2">
    <location>
        <begin position="39"/>
        <end position="40"/>
    </location>
</feature>
<feature type="non-consecutive residues" evidence="2">
    <location>
        <begin position="65"/>
        <end position="66"/>
    </location>
</feature>
<feature type="non-terminal residue">
    <location>
        <position position="1"/>
    </location>
</feature>
<feature type="non-terminal residue">
    <location>
        <position position="78"/>
    </location>
</feature>
<gene>
    <name type="primary">CSN5B</name>
    <name type="synonym">AJH1</name>
</gene>
<organism>
    <name type="scientific">Brassica oleracea</name>
    <name type="common">Wild cabbage</name>
    <dbReference type="NCBI Taxonomy" id="3712"/>
    <lineage>
        <taxon>Eukaryota</taxon>
        <taxon>Viridiplantae</taxon>
        <taxon>Streptophyta</taxon>
        <taxon>Embryophyta</taxon>
        <taxon>Tracheophyta</taxon>
        <taxon>Spermatophyta</taxon>
        <taxon>Magnoliopsida</taxon>
        <taxon>eudicotyledons</taxon>
        <taxon>Gunneridae</taxon>
        <taxon>Pentapetalae</taxon>
        <taxon>rosids</taxon>
        <taxon>malvids</taxon>
        <taxon>Brassicales</taxon>
        <taxon>Brassicaceae</taxon>
        <taxon>Brassiceae</taxon>
        <taxon>Brassica</taxon>
    </lineage>
</organism>
<proteinExistence type="evidence at protein level"/>
<reference key="1">
    <citation type="journal article" date="1998" name="FEBS Lett.">
        <title>The Arabidopsis homologue of an eIF3 complex subunit associates with the COP9 complex.</title>
        <authorList>
            <person name="Karniol B."/>
            <person name="Yahalom A."/>
            <person name="Kwok S."/>
            <person name="Tsuge T."/>
            <person name="Matsui M."/>
            <person name="Deng X.-W."/>
            <person name="Chamovitz D.A."/>
        </authorList>
    </citation>
    <scope>PROTEIN SEQUENCE OF 1-22 AND 52-65</scope>
    <scope>COMPOSITION OF THE CSN COMPLEX</scope>
</reference>
<reference key="2">
    <citation type="journal article" date="1999" name="Plant Cell">
        <title>Arabidopsis cop8 and fus4 mutations define the same gene that encodes subunit 4 of the COP9 signalosome.</title>
        <authorList>
            <person name="Serino G."/>
            <person name="Tsuge T."/>
            <person name="Kwok S."/>
            <person name="Matsui M."/>
            <person name="Wei N."/>
            <person name="Deng X.-W."/>
        </authorList>
    </citation>
    <scope>PROTEIN SEQUENCE OF 23-51 AND 66-78</scope>
    <scope>COMPONENT OF THE CSN COMPLEX WITH CSN1; CSN2; CSN3; CSN4; CSN6; CSN7 AND CSN8</scope>
</reference>
<evidence type="ECO:0000250" key="1"/>
<evidence type="ECO:0000305" key="2"/>
<sequence>VEQPDSSSSDGIFYYDEASQTKKISDDHVSEYQTIPLNKKQYYSLDITYFKSSLDSHLLDLLWNKKDILFNSARQSDK</sequence>
<comment type="function">
    <text evidence="1">Probable protease subunit of the COP9 signalosome complex (CSN), a complex involved in various cellular and developmental processes such as photomorphogenesis and auxin and jasmonate responses. The CSN complex is an essential regulator of the ubiquitin (Ubl) conjugation pathway by mediating the deneddylation of the cullin subunits of the SCF-type E3 ligase complexes, leading to decrease the Ubl ligase activity of SCF. In the complex, it probably acts as the catalytic center that mediates the cleavage of Nedd8 from cullins. It however has no metalloprotease activity by itself and requires the other subunits of the CSN complex. The CSN complex is involved in repression of photomorphogenesis in darkness by regulating the activity of COP1-containing Ubl ligase complexes (By similarity).</text>
</comment>
<comment type="cofactor">
    <cofactor evidence="1">
        <name>a divalent metal cation</name>
        <dbReference type="ChEBI" id="CHEBI:60240"/>
    </cofactor>
</comment>
<comment type="subunit">
    <text>Component of the CSN complex, probably composed of CSN1, CSN2, CSN3, CSN4, CSN5 (CSN5A or CSN5B), CSN6 (CSN6A or CSN6B), CSN7 and CSN8.</text>
</comment>
<comment type="subcellular location">
    <subcellularLocation>
        <location>Cytoplasm</location>
    </subcellularLocation>
    <subcellularLocation>
        <location>Nucleus</location>
    </subcellularLocation>
</comment>
<comment type="similarity">
    <text evidence="2">Belongs to the peptidase M67A family. CSN5 subfamily.</text>
</comment>
<keyword id="KW-0963">Cytoplasm</keyword>
<keyword id="KW-0217">Developmental protein</keyword>
<keyword id="KW-0903">Direct protein sequencing</keyword>
<keyword id="KW-0378">Hydrolase</keyword>
<keyword id="KW-0479">Metal-binding</keyword>
<keyword id="KW-0482">Metalloprotease</keyword>
<keyword id="KW-0539">Nucleus</keyword>
<keyword id="KW-0607">Phytochrome signaling pathway</keyword>
<keyword id="KW-0645">Protease</keyword>
<keyword id="KW-0736">Signalosome</keyword>